<name>CDC48_ENCCU</name>
<protein>
    <recommendedName>
        <fullName>Cell division control protein 48</fullName>
    </recommendedName>
</protein>
<proteinExistence type="evidence at protein level"/>
<sequence length="780" mass="87267">MAAAANEKDFSTAILESKTKNTLIVCDKDCSKLRTYQVGLHPTTLNELELFESDYVRILGKKKAELIFSTVALESVPPRHIAIVRDGRFNLRIRITDTVKLYRVDKDIPVVSKLNFLPIKDTVENIRGNIFDEFVRPFLDFNFMPLTTGSIYGVTSGLGRVEFKVTKMIDAQDMEIKHGSVTSTTSVYCDETISREEVEKEFNMVGYDDVGGCRAQMAKIRELVELPLRHSQLYSKIGVKPPKGILLYGPPGTGKTLIARAIANETGAFLFLINGPEIMSKMAGESESNLRKAFEEAEKNSPAIIFIDEIDALAPKREKSQGEVERRIVSQLLTLMDGMKARSNVIVLGATNRPNSIDPALRRYGRFDREIEIGVPDETGRLEILRIHTKNMKMSEDVDLVAINKELHGFTGSDLASLCSEAALQQIREKLPQIDLDSEKIDAKVLASLKVNSENFRYAIEHTDPSSLRETVIQSPNVKWSDIGGLEQVKQELRETVQYPVEYPEKFIKFGMTPAKGVLFYGPPGCGKTLLAKAVATECKANFISIKGPELLSMWVGESESNIRDLFARARGAAPCVLFFDEIDSIAKARSGNDGSSGATDRMLNQLLSEMDGINQKKNVFVIGATNRPDQLDSALMRPGRLDQLVYIPLPDLDSRVSILQATLKKTPLSPEIDLRQLAEATDKFSGADLSEICQRACKLAIRETIEYELEQKKKGSEMMDLEDPVPYLRPDHLVQSLKTARRSVSEKEVERYEAFARSMKVDVRKFDKKNDINDDGLYE</sequence>
<reference key="1">
    <citation type="journal article" date="2001" name="Genome Res.">
        <title>Sequence and analysis of chromosome I of the amitochondriate intracellular parasite Encephalitozoon cuniculi (Microspora).</title>
        <authorList>
            <person name="Peyret P."/>
            <person name="Katinka M.D."/>
            <person name="Duprat S."/>
            <person name="Duffieux F."/>
            <person name="Barbe V."/>
            <person name="Barbazanges M."/>
            <person name="Weissenbach J."/>
            <person name="Saurin W."/>
            <person name="Vivares C.P."/>
        </authorList>
    </citation>
    <scope>NUCLEOTIDE SEQUENCE [LARGE SCALE GENOMIC DNA]</scope>
    <source>
        <strain>GB-M1</strain>
    </source>
</reference>
<reference key="2">
    <citation type="journal article" date="2001" name="Nature">
        <title>Genome sequence and gene compaction of the eukaryote parasite Encephalitozoon cuniculi.</title>
        <authorList>
            <person name="Katinka M.D."/>
            <person name="Duprat S."/>
            <person name="Cornillot E."/>
            <person name="Metenier G."/>
            <person name="Thomarat F."/>
            <person name="Prensier G."/>
            <person name="Barbe V."/>
            <person name="Peyretaillade E."/>
            <person name="Brottier P."/>
            <person name="Wincker P."/>
            <person name="Delbac F."/>
            <person name="El Alaoui H."/>
            <person name="Peyret P."/>
            <person name="Saurin W."/>
            <person name="Gouy M."/>
            <person name="Weissenbach J."/>
            <person name="Vivares C.P."/>
        </authorList>
    </citation>
    <scope>NUCLEOTIDE SEQUENCE [LARGE SCALE GENOMIC DNA]</scope>
    <source>
        <strain>GB-M1</strain>
    </source>
</reference>
<reference key="3">
    <citation type="journal article" date="2006" name="Proteomics">
        <title>Proteomic analysis of the eukaryotic parasite Encephalitozoon cuniculi (microsporidia): a reference map for proteins expressed in late sporogonial stages.</title>
        <authorList>
            <person name="Brosson D."/>
            <person name="Kuhn L."/>
            <person name="Delbac F."/>
            <person name="Garin J."/>
            <person name="Vivares C.P."/>
            <person name="Texier C."/>
        </authorList>
    </citation>
    <scope>IDENTIFICATION BY MASS SPECTROMETRY [LARGE SCALE ANALYSIS]</scope>
    <scope>DEVELOPMENTAL STAGE</scope>
</reference>
<accession>Q8SSJ5</accession>
<organism>
    <name type="scientific">Encephalitozoon cuniculi (strain GB-M1)</name>
    <name type="common">Microsporidian parasite</name>
    <dbReference type="NCBI Taxonomy" id="284813"/>
    <lineage>
        <taxon>Eukaryota</taxon>
        <taxon>Fungi</taxon>
        <taxon>Fungi incertae sedis</taxon>
        <taxon>Microsporidia</taxon>
        <taxon>Unikaryonidae</taxon>
        <taxon>Encephalitozoon</taxon>
    </lineage>
</organism>
<dbReference type="EMBL" id="AL391737">
    <property type="protein sequence ID" value="CAD24996.1"/>
    <property type="molecule type" value="Genomic_DNA"/>
</dbReference>
<dbReference type="RefSeq" id="XP_965961.1">
    <property type="nucleotide sequence ID" value="XM_960868.1"/>
</dbReference>
<dbReference type="SMR" id="Q8SSJ5"/>
<dbReference type="FunCoup" id="Q8SSJ5">
    <property type="interactions" value="165"/>
</dbReference>
<dbReference type="STRING" id="284813.Q8SSJ5"/>
<dbReference type="VEuPathDB" id="MicrosporidiaDB:ECU01_1230"/>
<dbReference type="HOGENOM" id="CLU_000688_12_3_1"/>
<dbReference type="InParanoid" id="Q8SSJ5"/>
<dbReference type="OMA" id="VWPAYPE"/>
<dbReference type="OrthoDB" id="27435at2759"/>
<dbReference type="Proteomes" id="UP000000819">
    <property type="component" value="Chromosome I"/>
</dbReference>
<dbReference type="GO" id="GO:0005829">
    <property type="term" value="C:cytosol"/>
    <property type="evidence" value="ECO:0007669"/>
    <property type="project" value="TreeGrafter"/>
</dbReference>
<dbReference type="GO" id="GO:0005634">
    <property type="term" value="C:nucleus"/>
    <property type="evidence" value="ECO:0007669"/>
    <property type="project" value="TreeGrafter"/>
</dbReference>
<dbReference type="GO" id="GO:0034098">
    <property type="term" value="C:VCP-NPL4-UFD1 AAA ATPase complex"/>
    <property type="evidence" value="ECO:0007669"/>
    <property type="project" value="TreeGrafter"/>
</dbReference>
<dbReference type="GO" id="GO:0005524">
    <property type="term" value="F:ATP binding"/>
    <property type="evidence" value="ECO:0007669"/>
    <property type="project" value="UniProtKB-KW"/>
</dbReference>
<dbReference type="GO" id="GO:0016887">
    <property type="term" value="F:ATP hydrolysis activity"/>
    <property type="evidence" value="ECO:0007669"/>
    <property type="project" value="InterPro"/>
</dbReference>
<dbReference type="GO" id="GO:0031593">
    <property type="term" value="F:polyubiquitin modification-dependent protein binding"/>
    <property type="evidence" value="ECO:0007669"/>
    <property type="project" value="TreeGrafter"/>
</dbReference>
<dbReference type="GO" id="GO:0097352">
    <property type="term" value="P:autophagosome maturation"/>
    <property type="evidence" value="ECO:0007669"/>
    <property type="project" value="TreeGrafter"/>
</dbReference>
<dbReference type="GO" id="GO:0051228">
    <property type="term" value="P:mitotic spindle disassembly"/>
    <property type="evidence" value="ECO:0007669"/>
    <property type="project" value="TreeGrafter"/>
</dbReference>
<dbReference type="GO" id="GO:0030970">
    <property type="term" value="P:retrograde protein transport, ER to cytosol"/>
    <property type="evidence" value="ECO:0007669"/>
    <property type="project" value="TreeGrafter"/>
</dbReference>
<dbReference type="CDD" id="cd19519">
    <property type="entry name" value="RecA-like_CDC48_r1-like"/>
    <property type="match status" value="1"/>
</dbReference>
<dbReference type="CDD" id="cd19528">
    <property type="entry name" value="RecA-like_CDC48_r2-like"/>
    <property type="match status" value="1"/>
</dbReference>
<dbReference type="FunFam" id="1.10.8.60:FF:000057">
    <property type="entry name" value="AAA family ATPase, CDC48 subfamily"/>
    <property type="match status" value="1"/>
</dbReference>
<dbReference type="FunFam" id="3.40.50.300:FF:000012">
    <property type="entry name" value="Transitional endoplasmic reticulum ATPase"/>
    <property type="match status" value="1"/>
</dbReference>
<dbReference type="FunFam" id="3.40.50.300:FF:000048">
    <property type="entry name" value="Transitional endoplasmic reticulum ATPase"/>
    <property type="match status" value="1"/>
</dbReference>
<dbReference type="Gene3D" id="1.10.8.60">
    <property type="match status" value="1"/>
</dbReference>
<dbReference type="Gene3D" id="2.40.40.20">
    <property type="match status" value="1"/>
</dbReference>
<dbReference type="Gene3D" id="3.10.330.10">
    <property type="match status" value="1"/>
</dbReference>
<dbReference type="Gene3D" id="6.10.20.150">
    <property type="match status" value="1"/>
</dbReference>
<dbReference type="Gene3D" id="3.40.50.300">
    <property type="entry name" value="P-loop containing nucleotide triphosphate hydrolases"/>
    <property type="match status" value="2"/>
</dbReference>
<dbReference type="InterPro" id="IPR003593">
    <property type="entry name" value="AAA+_ATPase"/>
</dbReference>
<dbReference type="InterPro" id="IPR050168">
    <property type="entry name" value="AAA_ATPase_domain"/>
</dbReference>
<dbReference type="InterPro" id="IPR041569">
    <property type="entry name" value="AAA_lid_3"/>
</dbReference>
<dbReference type="InterPro" id="IPR009010">
    <property type="entry name" value="Asp_de-COase-like_dom_sf"/>
</dbReference>
<dbReference type="InterPro" id="IPR003959">
    <property type="entry name" value="ATPase_AAA_core"/>
</dbReference>
<dbReference type="InterPro" id="IPR003960">
    <property type="entry name" value="ATPase_AAA_CS"/>
</dbReference>
<dbReference type="InterPro" id="IPR029067">
    <property type="entry name" value="CDC48_domain_2-like_sf"/>
</dbReference>
<dbReference type="InterPro" id="IPR003338">
    <property type="entry name" value="CDC4_N-term_subdom"/>
</dbReference>
<dbReference type="InterPro" id="IPR027417">
    <property type="entry name" value="P-loop_NTPase"/>
</dbReference>
<dbReference type="PANTHER" id="PTHR23077">
    <property type="entry name" value="AAA-FAMILY ATPASE"/>
    <property type="match status" value="1"/>
</dbReference>
<dbReference type="PANTHER" id="PTHR23077:SF171">
    <property type="entry name" value="NUCLEAR VALOSIN-CONTAINING PROTEIN-LIKE"/>
    <property type="match status" value="1"/>
</dbReference>
<dbReference type="Pfam" id="PF00004">
    <property type="entry name" value="AAA"/>
    <property type="match status" value="2"/>
</dbReference>
<dbReference type="Pfam" id="PF17862">
    <property type="entry name" value="AAA_lid_3"/>
    <property type="match status" value="2"/>
</dbReference>
<dbReference type="SMART" id="SM00382">
    <property type="entry name" value="AAA"/>
    <property type="match status" value="2"/>
</dbReference>
<dbReference type="SMART" id="SM01073">
    <property type="entry name" value="CDC48_N"/>
    <property type="match status" value="1"/>
</dbReference>
<dbReference type="SUPFAM" id="SSF50692">
    <property type="entry name" value="ADC-like"/>
    <property type="match status" value="1"/>
</dbReference>
<dbReference type="SUPFAM" id="SSF54585">
    <property type="entry name" value="Cdc48 domain 2-like"/>
    <property type="match status" value="1"/>
</dbReference>
<dbReference type="SUPFAM" id="SSF52540">
    <property type="entry name" value="P-loop containing nucleoside triphosphate hydrolases"/>
    <property type="match status" value="2"/>
</dbReference>
<dbReference type="PROSITE" id="PS00674">
    <property type="entry name" value="AAA"/>
    <property type="match status" value="2"/>
</dbReference>
<keyword id="KW-0067">ATP-binding</keyword>
<keyword id="KW-0131">Cell cycle</keyword>
<keyword id="KW-0256">Endoplasmic reticulum</keyword>
<keyword id="KW-0547">Nucleotide-binding</keyword>
<keyword id="KW-0653">Protein transport</keyword>
<keyword id="KW-1185">Reference proteome</keyword>
<keyword id="KW-0677">Repeat</keyword>
<keyword id="KW-0813">Transport</keyword>
<comment type="function">
    <text evidence="2">Involved in spindle disassembly, degradation of ubiquitinated proteins and protein export from the endoplasmic reticulum to the cytoplasm. Acts as a chaperone that collects ubiquitinated substrates. Has a role in the endoplasmic reticulum-associated degradation (ERAD) pathway. Component of the ribosome quality control complex (RQC), a ribosome-associated complex that mediates ubiquitination and extraction of incompletely synthesized nascent chains for proteasomal degradation. CDC48 may provide the mechanical force that dislodges the polyubiquitinated nascent peptides from the exit channel.</text>
</comment>
<comment type="subunit">
    <text evidence="2">Component of the ribosome quality control complex (RQC), composed of the E3 ubiquitin ligase LTN1, RQC1 and RQC2, as well as CDC48 and its ubiquitin-binding cofactors. RQC forms a stable complex with 60S ribosomal subunits.</text>
</comment>
<comment type="subcellular location">
    <subcellularLocation>
        <location evidence="1">Endoplasmic reticulum</location>
    </subcellularLocation>
</comment>
<comment type="developmental stage">
    <text evidence="4">Expressed in late sporogonial stages.</text>
</comment>
<comment type="similarity">
    <text evidence="5">Belongs to the AAA ATPase family.</text>
</comment>
<evidence type="ECO:0000250" key="1"/>
<evidence type="ECO:0000250" key="2">
    <source>
        <dbReference type="UniProtKB" id="P25694"/>
    </source>
</evidence>
<evidence type="ECO:0000250" key="3">
    <source>
        <dbReference type="UniProtKB" id="P55072"/>
    </source>
</evidence>
<evidence type="ECO:0000269" key="4">
    <source>
    </source>
</evidence>
<evidence type="ECO:0000305" key="5"/>
<gene>
    <name type="primary">CDC48</name>
    <name type="ordered locus">ECU01_1230</name>
</gene>
<feature type="chain" id="PRO_0000382903" description="Cell division control protein 48">
    <location>
        <begin position="1"/>
        <end position="780"/>
    </location>
</feature>
<feature type="binding site" evidence="3">
    <location>
        <begin position="251"/>
        <end position="257"/>
    </location>
    <ligand>
        <name>ATP</name>
        <dbReference type="ChEBI" id="CHEBI:30616"/>
    </ligand>
</feature>
<feature type="binding site" evidence="3">
    <location>
        <position position="352"/>
    </location>
    <ligand>
        <name>ATP</name>
        <dbReference type="ChEBI" id="CHEBI:30616"/>
    </ligand>
</feature>
<feature type="binding site" evidence="3">
    <location>
        <position position="388"/>
    </location>
    <ligand>
        <name>ATP</name>
        <dbReference type="ChEBI" id="CHEBI:30616"/>
    </ligand>
</feature>